<gene>
    <name evidence="4" type="primary">ECH</name>
    <name evidence="6" type="ordered locus">At1g09330</name>
    <name evidence="7" type="ORF">T31J12.5</name>
</gene>
<comment type="function">
    <text evidence="2 3">Mediates trans-Golgi-network trafficking and cell elongation (PubMed:21512130, PubMed:23832588). Required for keeping the appropriate balance between secretory trafficking and vacuolar targeting of a subset of proteins (PubMed:21512130). The ECH/YIP4 complex is involved in the modulation of the trans-Golgi network (TGN)-mediated trafficking of some proteins and cell wall components (e.g. pectin and hemicellulose) to the cell wall in dark-grown hypocotyls and in secretory cells of the seed coat (PubMed:23832588).</text>
</comment>
<comment type="subunit">
    <text evidence="3">Component of a trans-Golgi network (TGN)-localized ECH/YIP4 complex made of ECH, YIP4A and YIP4B (PubMed:23832588). Interacts directly with YIP4A and YIP4B (PubMed:23832588).</text>
</comment>
<comment type="subcellular location">
    <subcellularLocation>
        <location evidence="3">Golgi apparatus</location>
        <location evidence="3">trans-Golgi network membrane</location>
        <topology evidence="1">Multi-pass membrane protein</topology>
    </subcellularLocation>
    <subcellularLocation>
        <location>Early endosome membrane</location>
        <topology>Multi-pass membrane protein</topology>
    </subcellularLocation>
</comment>
<comment type="disruption phenotype">
    <text evidence="2 3">Severe size reduction of all organs (PubMed:21512130, PubMed:23832588). Abnormal cell wall composition (PubMed:23832588).</text>
</comment>
<comment type="similarity">
    <text evidence="5">Belongs to the TVP23 family.</text>
</comment>
<comment type="sequence caution" evidence="5">
    <conflict type="erroneous gene model prediction">
        <sequence resource="EMBL-CDS" id="AAD18099"/>
    </conflict>
</comment>
<proteinExistence type="evidence at protein level"/>
<dbReference type="EMBL" id="AC006416">
    <property type="protein sequence ID" value="AAD18099.1"/>
    <property type="status" value="ALT_SEQ"/>
    <property type="molecule type" value="Genomic_DNA"/>
</dbReference>
<dbReference type="EMBL" id="CP002684">
    <property type="protein sequence ID" value="AEE28430.1"/>
    <property type="molecule type" value="Genomic_DNA"/>
</dbReference>
<dbReference type="EMBL" id="BT004772">
    <property type="protein sequence ID" value="AAO44038.1"/>
    <property type="molecule type" value="mRNA"/>
</dbReference>
<dbReference type="EMBL" id="AK228273">
    <property type="protein sequence ID" value="BAF00220.1"/>
    <property type="molecule type" value="mRNA"/>
</dbReference>
<dbReference type="EMBL" id="AY085379">
    <property type="protein sequence ID" value="AAM62608.1"/>
    <property type="molecule type" value="mRNA"/>
</dbReference>
<dbReference type="PIR" id="D86226">
    <property type="entry name" value="D86226"/>
</dbReference>
<dbReference type="RefSeq" id="NP_563842.1">
    <property type="nucleotide sequence ID" value="NM_100803.4"/>
</dbReference>
<dbReference type="BioGRID" id="22695">
    <property type="interactions" value="9"/>
</dbReference>
<dbReference type="FunCoup" id="Q8LEK2">
    <property type="interactions" value="3128"/>
</dbReference>
<dbReference type="IntAct" id="Q8LEK2">
    <property type="interactions" value="4"/>
</dbReference>
<dbReference type="STRING" id="3702.Q8LEK2"/>
<dbReference type="iPTMnet" id="Q8LEK2"/>
<dbReference type="PaxDb" id="3702-AT1G09330.1"/>
<dbReference type="ProteomicsDB" id="234661"/>
<dbReference type="EnsemblPlants" id="AT1G09330.1">
    <property type="protein sequence ID" value="AT1G09330.1"/>
    <property type="gene ID" value="AT1G09330"/>
</dbReference>
<dbReference type="GeneID" id="837454"/>
<dbReference type="Gramene" id="AT1G09330.1">
    <property type="protein sequence ID" value="AT1G09330.1"/>
    <property type="gene ID" value="AT1G09330"/>
</dbReference>
<dbReference type="KEGG" id="ath:AT1G09330"/>
<dbReference type="Araport" id="AT1G09330"/>
<dbReference type="TAIR" id="AT1G09330">
    <property type="gene designation" value="ECH"/>
</dbReference>
<dbReference type="eggNOG" id="KOG3195">
    <property type="taxonomic scope" value="Eukaryota"/>
</dbReference>
<dbReference type="HOGENOM" id="CLU_074845_2_0_1"/>
<dbReference type="InParanoid" id="Q8LEK2"/>
<dbReference type="OMA" id="KMIWWID"/>
<dbReference type="OrthoDB" id="1095715at2759"/>
<dbReference type="PhylomeDB" id="Q8LEK2"/>
<dbReference type="PRO" id="PR:Q8LEK2"/>
<dbReference type="Proteomes" id="UP000006548">
    <property type="component" value="Chromosome 1"/>
</dbReference>
<dbReference type="ExpressionAtlas" id="Q8LEK2">
    <property type="expression patterns" value="baseline and differential"/>
</dbReference>
<dbReference type="GO" id="GO:0031901">
    <property type="term" value="C:early endosome membrane"/>
    <property type="evidence" value="ECO:0007669"/>
    <property type="project" value="UniProtKB-SubCell"/>
</dbReference>
<dbReference type="GO" id="GO:0005768">
    <property type="term" value="C:endosome"/>
    <property type="evidence" value="ECO:0007005"/>
    <property type="project" value="TAIR"/>
</dbReference>
<dbReference type="GO" id="GO:0005576">
    <property type="term" value="C:extracellular region"/>
    <property type="evidence" value="ECO:0007005"/>
    <property type="project" value="TAIR"/>
</dbReference>
<dbReference type="GO" id="GO:0005794">
    <property type="term" value="C:Golgi apparatus"/>
    <property type="evidence" value="ECO:0007005"/>
    <property type="project" value="TAIR"/>
</dbReference>
<dbReference type="GO" id="GO:0005802">
    <property type="term" value="C:trans-Golgi network"/>
    <property type="evidence" value="ECO:0000314"/>
    <property type="project" value="UniProtKB"/>
</dbReference>
<dbReference type="GO" id="GO:0032588">
    <property type="term" value="C:trans-Golgi network membrane"/>
    <property type="evidence" value="ECO:0000314"/>
    <property type="project" value="UniProtKB"/>
</dbReference>
<dbReference type="GO" id="GO:0007030">
    <property type="term" value="P:Golgi organization"/>
    <property type="evidence" value="ECO:0000315"/>
    <property type="project" value="UniProtKB"/>
</dbReference>
<dbReference type="GO" id="GO:0099402">
    <property type="term" value="P:plant organ development"/>
    <property type="evidence" value="ECO:0000315"/>
    <property type="project" value="UniProtKB"/>
</dbReference>
<dbReference type="GO" id="GO:0009306">
    <property type="term" value="P:protein secretion"/>
    <property type="evidence" value="ECO:0000315"/>
    <property type="project" value="UniProtKB"/>
</dbReference>
<dbReference type="GO" id="GO:0009826">
    <property type="term" value="P:unidimensional cell growth"/>
    <property type="evidence" value="ECO:0000315"/>
    <property type="project" value="UniProtKB"/>
</dbReference>
<dbReference type="GO" id="GO:0007034">
    <property type="term" value="P:vacuolar transport"/>
    <property type="evidence" value="ECO:0000315"/>
    <property type="project" value="TAIR"/>
</dbReference>
<dbReference type="InterPro" id="IPR008564">
    <property type="entry name" value="TVP23-like"/>
</dbReference>
<dbReference type="PANTHER" id="PTHR13019">
    <property type="entry name" value="GOLGI APPARATUS MEMBRANE PROTEIN TVP23"/>
    <property type="match status" value="1"/>
</dbReference>
<dbReference type="PANTHER" id="PTHR13019:SF7">
    <property type="entry name" value="GOLGI APPARATUS MEMBRANE PROTEIN TVP23"/>
    <property type="match status" value="1"/>
</dbReference>
<dbReference type="Pfam" id="PF05832">
    <property type="entry name" value="DUF846"/>
    <property type="match status" value="1"/>
</dbReference>
<feature type="chain" id="PRO_0000212835" description="Golgi apparatus membrane protein-like protein ECHIDNA">
    <location>
        <begin position="1"/>
        <end position="186"/>
    </location>
</feature>
<feature type="transmembrane region" description="Helical" evidence="1">
    <location>
        <begin position="35"/>
        <end position="55"/>
    </location>
</feature>
<feature type="transmembrane region" description="Helical" evidence="1">
    <location>
        <begin position="108"/>
        <end position="128"/>
    </location>
</feature>
<feature type="transmembrane region" description="Helical" evidence="1">
    <location>
        <begin position="132"/>
        <end position="152"/>
    </location>
</feature>
<feature type="modified residue" description="N-acetylmethionine" evidence="8">
    <location>
        <position position="1"/>
    </location>
</feature>
<accession>Q8LEK2</accession>
<accession>A0A178WGW7</accession>
<accession>Q0WRM9</accession>
<accession>Q9ZPZ2</accession>
<reference key="1">
    <citation type="journal article" date="2000" name="Nature">
        <title>Sequence and analysis of chromosome 1 of the plant Arabidopsis thaliana.</title>
        <authorList>
            <person name="Theologis A."/>
            <person name="Ecker J.R."/>
            <person name="Palm C.J."/>
            <person name="Federspiel N.A."/>
            <person name="Kaul S."/>
            <person name="White O."/>
            <person name="Alonso J."/>
            <person name="Altafi H."/>
            <person name="Araujo R."/>
            <person name="Bowman C.L."/>
            <person name="Brooks S.Y."/>
            <person name="Buehler E."/>
            <person name="Chan A."/>
            <person name="Chao Q."/>
            <person name="Chen H."/>
            <person name="Cheuk R.F."/>
            <person name="Chin C.W."/>
            <person name="Chung M.K."/>
            <person name="Conn L."/>
            <person name="Conway A.B."/>
            <person name="Conway A.R."/>
            <person name="Creasy T.H."/>
            <person name="Dewar K."/>
            <person name="Dunn P."/>
            <person name="Etgu P."/>
            <person name="Feldblyum T.V."/>
            <person name="Feng J.-D."/>
            <person name="Fong B."/>
            <person name="Fujii C.Y."/>
            <person name="Gill J.E."/>
            <person name="Goldsmith A.D."/>
            <person name="Haas B."/>
            <person name="Hansen N.F."/>
            <person name="Hughes B."/>
            <person name="Huizar L."/>
            <person name="Hunter J.L."/>
            <person name="Jenkins J."/>
            <person name="Johnson-Hopson C."/>
            <person name="Khan S."/>
            <person name="Khaykin E."/>
            <person name="Kim C.J."/>
            <person name="Koo H.L."/>
            <person name="Kremenetskaia I."/>
            <person name="Kurtz D.B."/>
            <person name="Kwan A."/>
            <person name="Lam B."/>
            <person name="Langin-Hooper S."/>
            <person name="Lee A."/>
            <person name="Lee J.M."/>
            <person name="Lenz C.A."/>
            <person name="Li J.H."/>
            <person name="Li Y.-P."/>
            <person name="Lin X."/>
            <person name="Liu S.X."/>
            <person name="Liu Z.A."/>
            <person name="Luros J.S."/>
            <person name="Maiti R."/>
            <person name="Marziali A."/>
            <person name="Militscher J."/>
            <person name="Miranda M."/>
            <person name="Nguyen M."/>
            <person name="Nierman W.C."/>
            <person name="Osborne B.I."/>
            <person name="Pai G."/>
            <person name="Peterson J."/>
            <person name="Pham P.K."/>
            <person name="Rizzo M."/>
            <person name="Rooney T."/>
            <person name="Rowley D."/>
            <person name="Sakano H."/>
            <person name="Salzberg S.L."/>
            <person name="Schwartz J.R."/>
            <person name="Shinn P."/>
            <person name="Southwick A.M."/>
            <person name="Sun H."/>
            <person name="Tallon L.J."/>
            <person name="Tambunga G."/>
            <person name="Toriumi M.J."/>
            <person name="Town C.D."/>
            <person name="Utterback T."/>
            <person name="Van Aken S."/>
            <person name="Vaysberg M."/>
            <person name="Vysotskaia V.S."/>
            <person name="Walker M."/>
            <person name="Wu D."/>
            <person name="Yu G."/>
            <person name="Fraser C.M."/>
            <person name="Venter J.C."/>
            <person name="Davis R.W."/>
        </authorList>
    </citation>
    <scope>NUCLEOTIDE SEQUENCE [LARGE SCALE GENOMIC DNA]</scope>
    <source>
        <strain>cv. Columbia</strain>
    </source>
</reference>
<reference key="2">
    <citation type="journal article" date="2017" name="Plant J.">
        <title>Araport11: a complete reannotation of the Arabidopsis thaliana reference genome.</title>
        <authorList>
            <person name="Cheng C.Y."/>
            <person name="Krishnakumar V."/>
            <person name="Chan A.P."/>
            <person name="Thibaud-Nissen F."/>
            <person name="Schobel S."/>
            <person name="Town C.D."/>
        </authorList>
    </citation>
    <scope>GENOME REANNOTATION</scope>
    <source>
        <strain>cv. Columbia</strain>
    </source>
</reference>
<reference key="3">
    <citation type="journal article" date="2003" name="Science">
        <title>Empirical analysis of transcriptional activity in the Arabidopsis genome.</title>
        <authorList>
            <person name="Yamada K."/>
            <person name="Lim J."/>
            <person name="Dale J.M."/>
            <person name="Chen H."/>
            <person name="Shinn P."/>
            <person name="Palm C.J."/>
            <person name="Southwick A.M."/>
            <person name="Wu H.C."/>
            <person name="Kim C.J."/>
            <person name="Nguyen M."/>
            <person name="Pham P.K."/>
            <person name="Cheuk R.F."/>
            <person name="Karlin-Newmann G."/>
            <person name="Liu S.X."/>
            <person name="Lam B."/>
            <person name="Sakano H."/>
            <person name="Wu T."/>
            <person name="Yu G."/>
            <person name="Miranda M."/>
            <person name="Quach H.L."/>
            <person name="Tripp M."/>
            <person name="Chang C.H."/>
            <person name="Lee J.M."/>
            <person name="Toriumi M.J."/>
            <person name="Chan M.M."/>
            <person name="Tang C.C."/>
            <person name="Onodera C.S."/>
            <person name="Deng J.M."/>
            <person name="Akiyama K."/>
            <person name="Ansari Y."/>
            <person name="Arakawa T."/>
            <person name="Banh J."/>
            <person name="Banno F."/>
            <person name="Bowser L."/>
            <person name="Brooks S.Y."/>
            <person name="Carninci P."/>
            <person name="Chao Q."/>
            <person name="Choy N."/>
            <person name="Enju A."/>
            <person name="Goldsmith A.D."/>
            <person name="Gurjal M."/>
            <person name="Hansen N.F."/>
            <person name="Hayashizaki Y."/>
            <person name="Johnson-Hopson C."/>
            <person name="Hsuan V.W."/>
            <person name="Iida K."/>
            <person name="Karnes M."/>
            <person name="Khan S."/>
            <person name="Koesema E."/>
            <person name="Ishida J."/>
            <person name="Jiang P.X."/>
            <person name="Jones T."/>
            <person name="Kawai J."/>
            <person name="Kamiya A."/>
            <person name="Meyers C."/>
            <person name="Nakajima M."/>
            <person name="Narusaka M."/>
            <person name="Seki M."/>
            <person name="Sakurai T."/>
            <person name="Satou M."/>
            <person name="Tamse R."/>
            <person name="Vaysberg M."/>
            <person name="Wallender E.K."/>
            <person name="Wong C."/>
            <person name="Yamamura Y."/>
            <person name="Yuan S."/>
            <person name="Shinozaki K."/>
            <person name="Davis R.W."/>
            <person name="Theologis A."/>
            <person name="Ecker J.R."/>
        </authorList>
    </citation>
    <scope>NUCLEOTIDE SEQUENCE [LARGE SCALE MRNA]</scope>
    <source>
        <strain>cv. Columbia</strain>
    </source>
</reference>
<reference key="4">
    <citation type="submission" date="2006-07" db="EMBL/GenBank/DDBJ databases">
        <title>Large-scale analysis of RIKEN Arabidopsis full-length (RAFL) cDNAs.</title>
        <authorList>
            <person name="Totoki Y."/>
            <person name="Seki M."/>
            <person name="Ishida J."/>
            <person name="Nakajima M."/>
            <person name="Enju A."/>
            <person name="Kamiya A."/>
            <person name="Narusaka M."/>
            <person name="Shin-i T."/>
            <person name="Nakagawa M."/>
            <person name="Sakamoto N."/>
            <person name="Oishi K."/>
            <person name="Kohara Y."/>
            <person name="Kobayashi M."/>
            <person name="Toyoda A."/>
            <person name="Sakaki Y."/>
            <person name="Sakurai T."/>
            <person name="Iida K."/>
            <person name="Akiyama K."/>
            <person name="Satou M."/>
            <person name="Toyoda T."/>
            <person name="Konagaya A."/>
            <person name="Carninci P."/>
            <person name="Kawai J."/>
            <person name="Hayashizaki Y."/>
            <person name="Shinozaki K."/>
        </authorList>
    </citation>
    <scope>NUCLEOTIDE SEQUENCE [LARGE SCALE MRNA]</scope>
    <source>
        <strain>cv. Columbia</strain>
    </source>
</reference>
<reference key="5">
    <citation type="submission" date="2002-03" db="EMBL/GenBank/DDBJ databases">
        <title>Full-length cDNA from Arabidopsis thaliana.</title>
        <authorList>
            <person name="Brover V.V."/>
            <person name="Troukhan M.E."/>
            <person name="Alexandrov N.A."/>
            <person name="Lu Y.-P."/>
            <person name="Flavell R.B."/>
            <person name="Feldmann K.A."/>
        </authorList>
    </citation>
    <scope>NUCLEOTIDE SEQUENCE [LARGE SCALE MRNA]</scope>
</reference>
<reference key="6">
    <citation type="journal article" date="2011" name="Proc. Natl. Acad. Sci. U.S.A.">
        <title>Conserved Arabidopsis ECHIDNA protein mediates trans-Golgi-network trafficking and cell elongation.</title>
        <authorList>
            <person name="Gendre D."/>
            <person name="Oh J."/>
            <person name="Boutte Y."/>
            <person name="Best J.G."/>
            <person name="Samuels L."/>
            <person name="Nilsson R."/>
            <person name="Uemura T."/>
            <person name="Marchant A."/>
            <person name="Bennett M.J."/>
            <person name="Grebe M."/>
            <person name="Bhalerao R.P."/>
        </authorList>
    </citation>
    <scope>FUNCTION</scope>
    <scope>DISRUPTION PHENOTYPE</scope>
</reference>
<reference key="7">
    <citation type="journal article" date="2012" name="Mol. Cell. Proteomics">
        <title>Comparative large-scale characterisation of plant vs. mammal proteins reveals similar and idiosyncratic N-alpha acetylation features.</title>
        <authorList>
            <person name="Bienvenut W.V."/>
            <person name="Sumpton D."/>
            <person name="Martinez A."/>
            <person name="Lilla S."/>
            <person name="Espagne C."/>
            <person name="Meinnel T."/>
            <person name="Giglione C."/>
        </authorList>
    </citation>
    <scope>ACETYLATION [LARGE SCALE ANALYSIS] AT MET-1</scope>
    <scope>IDENTIFICATION BY MASS SPECTROMETRY [LARGE SCALE ANALYSIS]</scope>
</reference>
<reference key="8">
    <citation type="journal article" date="2013" name="Plant Cell">
        <title>Trans-Golgi network localized ECHIDNA/Ypt interacting protein complex is required for the secretion of cell wall polysaccharides in Arabidopsis.</title>
        <authorList>
            <person name="Gendre D."/>
            <person name="McFarlane H.E."/>
            <person name="Johnson E."/>
            <person name="Mouille G."/>
            <person name="Sjoedin A."/>
            <person name="Oh J."/>
            <person name="Levesque-Tremblay G."/>
            <person name="Watanabe Y."/>
            <person name="Samuels L."/>
            <person name="Bhalerao R.P."/>
        </authorList>
    </citation>
    <scope>FUNCTION</scope>
    <scope>DISRUPTION PHENOTYPE</scope>
    <scope>SUBUNIT</scope>
    <scope>SUBCELLULAR LOCATION</scope>
    <scope>INTERACTION WITH YIP4A AND YIP4B</scope>
    <source>
        <strain>cv. Columbia</strain>
    </source>
</reference>
<name>TVP23_ARATH</name>
<organism>
    <name type="scientific">Arabidopsis thaliana</name>
    <name type="common">Mouse-ear cress</name>
    <dbReference type="NCBI Taxonomy" id="3702"/>
    <lineage>
        <taxon>Eukaryota</taxon>
        <taxon>Viridiplantae</taxon>
        <taxon>Streptophyta</taxon>
        <taxon>Embryophyta</taxon>
        <taxon>Tracheophyta</taxon>
        <taxon>Spermatophyta</taxon>
        <taxon>Magnoliopsida</taxon>
        <taxon>eudicotyledons</taxon>
        <taxon>Gunneridae</taxon>
        <taxon>Pentapetalae</taxon>
        <taxon>rosids</taxon>
        <taxon>malvids</taxon>
        <taxon>Brassicales</taxon>
        <taxon>Brassicaceae</taxon>
        <taxon>Camelineae</taxon>
        <taxon>Arabidopsis</taxon>
    </lineage>
</organism>
<keyword id="KW-0007">Acetylation</keyword>
<keyword id="KW-0967">Endosome</keyword>
<keyword id="KW-0333">Golgi apparatus</keyword>
<keyword id="KW-0472">Membrane</keyword>
<keyword id="KW-1185">Reference proteome</keyword>
<keyword id="KW-0812">Transmembrane</keyword>
<keyword id="KW-1133">Transmembrane helix</keyword>
<protein>
    <recommendedName>
        <fullName evidence="4">Golgi apparatus membrane protein-like protein ECHIDNA</fullName>
    </recommendedName>
</protein>
<evidence type="ECO:0000255" key="1"/>
<evidence type="ECO:0000269" key="2">
    <source>
    </source>
</evidence>
<evidence type="ECO:0000269" key="3">
    <source>
    </source>
</evidence>
<evidence type="ECO:0000303" key="4">
    <source>
    </source>
</evidence>
<evidence type="ECO:0000305" key="5"/>
<evidence type="ECO:0000312" key="6">
    <source>
        <dbReference type="Araport" id="AT1G09330"/>
    </source>
</evidence>
<evidence type="ECO:0000312" key="7">
    <source>
        <dbReference type="EMBL" id="AAD18099.1"/>
    </source>
</evidence>
<evidence type="ECO:0007744" key="8">
    <source>
    </source>
</evidence>
<sequence length="186" mass="21238">MDPNNQIQAPVENYANPRTCLFHVLFKGAALAFYILSALFFNSFVIIFVVTVLLAALDFWVVKNVSGRILVGLRWWNEINDLGESVWKFESLDQESLARMNKKDSWLFWWTLYLAAAAWFILGVFSLIRFQADYLLVVGVCLSLNVANIIGFTKCKKDAKKQFQQFASQTIASRFQSTVQSAFTLV</sequence>